<dbReference type="SMR" id="P82960"/>
<dbReference type="ArachnoServer" id="AS000329">
    <property type="toxin name" value="U1-theraphotoxin-Hs1b"/>
</dbReference>
<dbReference type="GO" id="GO:0005576">
    <property type="term" value="C:extracellular region"/>
    <property type="evidence" value="ECO:0007669"/>
    <property type="project" value="UniProtKB-SubCell"/>
</dbReference>
<dbReference type="GO" id="GO:0035792">
    <property type="term" value="C:host cell postsynaptic membrane"/>
    <property type="evidence" value="ECO:0007669"/>
    <property type="project" value="UniProtKB-KW"/>
</dbReference>
<dbReference type="GO" id="GO:0090729">
    <property type="term" value="F:toxin activity"/>
    <property type="evidence" value="ECO:0007669"/>
    <property type="project" value="UniProtKB-KW"/>
</dbReference>
<dbReference type="InterPro" id="IPR012625">
    <property type="entry name" value="Hwtx-2-like"/>
</dbReference>
<dbReference type="Pfam" id="PF08089">
    <property type="entry name" value="Toxin_20"/>
    <property type="match status" value="1"/>
</dbReference>
<dbReference type="SUPFAM" id="SSF57059">
    <property type="entry name" value="omega toxin-like"/>
    <property type="match status" value="1"/>
</dbReference>
<dbReference type="PROSITE" id="PS60022">
    <property type="entry name" value="HWTX_2"/>
    <property type="match status" value="1"/>
</dbReference>
<comment type="function">
    <text evidence="1">Lethal neurotoxin that blocks neuromuscular transmission. Acts cooperatively to potentiate the activity of huwentoxin-I.</text>
</comment>
<comment type="subunit">
    <text>Form 1 and form 2 may dimerize.</text>
</comment>
<comment type="subcellular location">
    <subcellularLocation>
        <location>Secreted</location>
    </subcellularLocation>
</comment>
<comment type="tissue specificity">
    <text>Expressed by the venom gland.</text>
</comment>
<comment type="mass spectrometry" mass="4305.2" method="MALDI" evidence="1"/>
<comment type="similarity">
    <text evidence="3">Belongs to the neurotoxin 12 (Hwtx-2) family. 02 (Hwtx-2) subfamily.</text>
</comment>
<reference key="1">
    <citation type="journal article" date="1999" name="J. Pept. Res.">
        <title>Purification and characterization of huwentoxin-II, a neurotoxic peptide from the venom of the Chinese bird spider Selenocosmia huwena.</title>
        <authorList>
            <person name="Shu Q."/>
            <person name="Liang S.-P."/>
        </authorList>
    </citation>
    <scope>PROTEIN SEQUENCE</scope>
    <scope>FUNCTION</scope>
    <scope>MASS SPECTROMETRY</scope>
    <source>
        <tissue>Venom</tissue>
    </source>
</reference>
<reference key="2">
    <citation type="journal article" date="2001" name="Eur. J. Biochem.">
        <title>Assignment of the disulfide bonds of huwentoxin-II by Edman degradation sequencing and stepwise thiol modification.</title>
        <authorList>
            <person name="Shu Q."/>
            <person name="Huang R."/>
            <person name="Liang S.-P."/>
        </authorList>
    </citation>
    <scope>DISULFIDE BONDS</scope>
</reference>
<sequence length="37" mass="4305">LFECSFSCEQEKEGDKPCKKKKCKGGWKCKFNMCVKV</sequence>
<keyword id="KW-0903">Direct protein sequencing</keyword>
<keyword id="KW-1015">Disulfide bond</keyword>
<keyword id="KW-0528">Neurotoxin</keyword>
<keyword id="KW-0629">Postsynaptic neurotoxin</keyword>
<keyword id="KW-0964">Secreted</keyword>
<keyword id="KW-0800">Toxin</keyword>
<evidence type="ECO:0000269" key="1">
    <source>
    </source>
</evidence>
<evidence type="ECO:0000269" key="2">
    <source>
    </source>
</evidence>
<evidence type="ECO:0000305" key="3"/>
<accession>P82960</accession>
<feature type="peptide" id="PRO_0000044983" description="U1-theraphotoxin-Hs1b">
    <location>
        <begin position="1"/>
        <end position="37"/>
    </location>
</feature>
<feature type="disulfide bond" evidence="2">
    <location>
        <begin position="4"/>
        <end position="18"/>
    </location>
</feature>
<feature type="disulfide bond" evidence="2">
    <location>
        <begin position="8"/>
        <end position="29"/>
    </location>
</feature>
<feature type="disulfide bond" evidence="2">
    <location>
        <begin position="23"/>
        <end position="34"/>
    </location>
</feature>
<name>TXH22_CYRSC</name>
<proteinExistence type="evidence at protein level"/>
<organism>
    <name type="scientific">Cyriopagopus schmidti</name>
    <name type="common">Chinese bird spider</name>
    <name type="synonym">Haplopelma schmidti</name>
    <dbReference type="NCBI Taxonomy" id="29017"/>
    <lineage>
        <taxon>Eukaryota</taxon>
        <taxon>Metazoa</taxon>
        <taxon>Ecdysozoa</taxon>
        <taxon>Arthropoda</taxon>
        <taxon>Chelicerata</taxon>
        <taxon>Arachnida</taxon>
        <taxon>Araneae</taxon>
        <taxon>Mygalomorphae</taxon>
        <taxon>Theraphosidae</taxon>
        <taxon>Cyriopagopus</taxon>
    </lineage>
</organism>
<protein>
    <recommendedName>
        <fullName>U1-theraphotoxin-Hs1b</fullName>
        <shortName>U1-TRTX-Hs1b</shortName>
    </recommendedName>
    <alternativeName>
        <fullName>Huwentoxin-2 form 2</fullName>
    </alternativeName>
    <alternativeName>
        <fullName>Huwentoxin-II</fullName>
        <shortName>HwTx-II</shortName>
    </alternativeName>
</protein>